<feature type="chain" id="PRO_1000140734" description="Small ribosomal subunit protein uS4">
    <location>
        <begin position="1"/>
        <end position="206"/>
    </location>
</feature>
<feature type="domain" description="S4 RNA-binding" evidence="1">
    <location>
        <begin position="96"/>
        <end position="156"/>
    </location>
</feature>
<comment type="function">
    <text evidence="1">One of the primary rRNA binding proteins, it binds directly to 16S rRNA where it nucleates assembly of the body of the 30S subunit.</text>
</comment>
<comment type="function">
    <text evidence="1">With S5 and S12 plays an important role in translational accuracy.</text>
</comment>
<comment type="subunit">
    <text evidence="1">Part of the 30S ribosomal subunit. Contacts protein S5. The interaction surface between S4 and S5 is involved in control of translational fidelity.</text>
</comment>
<comment type="similarity">
    <text evidence="1">Belongs to the universal ribosomal protein uS4 family.</text>
</comment>
<accession>B7LRR3</accession>
<dbReference type="EMBL" id="CU928158">
    <property type="protein sequence ID" value="CAQ90760.1"/>
    <property type="molecule type" value="Genomic_DNA"/>
</dbReference>
<dbReference type="RefSeq" id="WP_000135224.1">
    <property type="nucleotide sequence ID" value="NC_011740.1"/>
</dbReference>
<dbReference type="SMR" id="B7LRR3"/>
<dbReference type="GeneID" id="93778691"/>
<dbReference type="KEGG" id="efe:EFER_3280"/>
<dbReference type="HOGENOM" id="CLU_092403_0_2_6"/>
<dbReference type="OrthoDB" id="9803672at2"/>
<dbReference type="Proteomes" id="UP000000745">
    <property type="component" value="Chromosome"/>
</dbReference>
<dbReference type="GO" id="GO:0015935">
    <property type="term" value="C:small ribosomal subunit"/>
    <property type="evidence" value="ECO:0007669"/>
    <property type="project" value="InterPro"/>
</dbReference>
<dbReference type="GO" id="GO:0019843">
    <property type="term" value="F:rRNA binding"/>
    <property type="evidence" value="ECO:0007669"/>
    <property type="project" value="UniProtKB-UniRule"/>
</dbReference>
<dbReference type="GO" id="GO:0003735">
    <property type="term" value="F:structural constituent of ribosome"/>
    <property type="evidence" value="ECO:0007669"/>
    <property type="project" value="InterPro"/>
</dbReference>
<dbReference type="GO" id="GO:0042274">
    <property type="term" value="P:ribosomal small subunit biogenesis"/>
    <property type="evidence" value="ECO:0007669"/>
    <property type="project" value="TreeGrafter"/>
</dbReference>
<dbReference type="GO" id="GO:0006412">
    <property type="term" value="P:translation"/>
    <property type="evidence" value="ECO:0007669"/>
    <property type="project" value="UniProtKB-UniRule"/>
</dbReference>
<dbReference type="CDD" id="cd00165">
    <property type="entry name" value="S4"/>
    <property type="match status" value="1"/>
</dbReference>
<dbReference type="FunFam" id="1.10.1050.10:FF:000001">
    <property type="entry name" value="30S ribosomal protein S4"/>
    <property type="match status" value="1"/>
</dbReference>
<dbReference type="FunFam" id="3.10.290.10:FF:000001">
    <property type="entry name" value="30S ribosomal protein S4"/>
    <property type="match status" value="1"/>
</dbReference>
<dbReference type="Gene3D" id="1.10.1050.10">
    <property type="entry name" value="Ribosomal Protein S4 Delta 41, Chain A, domain 1"/>
    <property type="match status" value="1"/>
</dbReference>
<dbReference type="Gene3D" id="3.10.290.10">
    <property type="entry name" value="RNA-binding S4 domain"/>
    <property type="match status" value="1"/>
</dbReference>
<dbReference type="HAMAP" id="MF_01306_B">
    <property type="entry name" value="Ribosomal_uS4_B"/>
    <property type="match status" value="1"/>
</dbReference>
<dbReference type="InterPro" id="IPR022801">
    <property type="entry name" value="Ribosomal_uS4"/>
</dbReference>
<dbReference type="InterPro" id="IPR005709">
    <property type="entry name" value="Ribosomal_uS4_bac-type"/>
</dbReference>
<dbReference type="InterPro" id="IPR018079">
    <property type="entry name" value="Ribosomal_uS4_CS"/>
</dbReference>
<dbReference type="InterPro" id="IPR001912">
    <property type="entry name" value="Ribosomal_uS4_N"/>
</dbReference>
<dbReference type="InterPro" id="IPR002942">
    <property type="entry name" value="S4_RNA-bd"/>
</dbReference>
<dbReference type="InterPro" id="IPR036986">
    <property type="entry name" value="S4_RNA-bd_sf"/>
</dbReference>
<dbReference type="NCBIfam" id="NF003717">
    <property type="entry name" value="PRK05327.1"/>
    <property type="match status" value="1"/>
</dbReference>
<dbReference type="NCBIfam" id="TIGR01017">
    <property type="entry name" value="rpsD_bact"/>
    <property type="match status" value="1"/>
</dbReference>
<dbReference type="PANTHER" id="PTHR11831">
    <property type="entry name" value="30S 40S RIBOSOMAL PROTEIN"/>
    <property type="match status" value="1"/>
</dbReference>
<dbReference type="PANTHER" id="PTHR11831:SF4">
    <property type="entry name" value="SMALL RIBOSOMAL SUBUNIT PROTEIN US4M"/>
    <property type="match status" value="1"/>
</dbReference>
<dbReference type="Pfam" id="PF00163">
    <property type="entry name" value="Ribosomal_S4"/>
    <property type="match status" value="1"/>
</dbReference>
<dbReference type="Pfam" id="PF01479">
    <property type="entry name" value="S4"/>
    <property type="match status" value="1"/>
</dbReference>
<dbReference type="SMART" id="SM01390">
    <property type="entry name" value="Ribosomal_S4"/>
    <property type="match status" value="1"/>
</dbReference>
<dbReference type="SMART" id="SM00363">
    <property type="entry name" value="S4"/>
    <property type="match status" value="1"/>
</dbReference>
<dbReference type="SUPFAM" id="SSF55174">
    <property type="entry name" value="Alpha-L RNA-binding motif"/>
    <property type="match status" value="1"/>
</dbReference>
<dbReference type="PROSITE" id="PS00632">
    <property type="entry name" value="RIBOSOMAL_S4"/>
    <property type="match status" value="1"/>
</dbReference>
<dbReference type="PROSITE" id="PS50889">
    <property type="entry name" value="S4"/>
    <property type="match status" value="1"/>
</dbReference>
<organism>
    <name type="scientific">Escherichia fergusonii (strain ATCC 35469 / DSM 13698 / CCUG 18766 / IAM 14443 / JCM 21226 / LMG 7866 / NBRC 102419 / NCTC 12128 / CDC 0568-73)</name>
    <dbReference type="NCBI Taxonomy" id="585054"/>
    <lineage>
        <taxon>Bacteria</taxon>
        <taxon>Pseudomonadati</taxon>
        <taxon>Pseudomonadota</taxon>
        <taxon>Gammaproteobacteria</taxon>
        <taxon>Enterobacterales</taxon>
        <taxon>Enterobacteriaceae</taxon>
        <taxon>Escherichia</taxon>
    </lineage>
</organism>
<evidence type="ECO:0000255" key="1">
    <source>
        <dbReference type="HAMAP-Rule" id="MF_01306"/>
    </source>
</evidence>
<evidence type="ECO:0000305" key="2"/>
<proteinExistence type="inferred from homology"/>
<sequence length="206" mass="23469">MARYLGPKLKLSRREGTDLFLKSGVRAIDTKCKIEQAPGQHGARKPRLSDYGVQLREKQKVRRIYGVLERQFRNYYKEAARLKGNTGENLLALLEGRLDNVVYRMGFGATRAEARQLVSHKAIMVNGRVVNIASYQVSPNDVVSIREKAKKQSRVKAALELAEQREKPTWLEVDAGKMEGTFKRKPERSDLSADINEHLIVELYSK</sequence>
<keyword id="KW-0687">Ribonucleoprotein</keyword>
<keyword id="KW-0689">Ribosomal protein</keyword>
<keyword id="KW-0694">RNA-binding</keyword>
<keyword id="KW-0699">rRNA-binding</keyword>
<reference key="1">
    <citation type="journal article" date="2009" name="PLoS Genet.">
        <title>Organised genome dynamics in the Escherichia coli species results in highly diverse adaptive paths.</title>
        <authorList>
            <person name="Touchon M."/>
            <person name="Hoede C."/>
            <person name="Tenaillon O."/>
            <person name="Barbe V."/>
            <person name="Baeriswyl S."/>
            <person name="Bidet P."/>
            <person name="Bingen E."/>
            <person name="Bonacorsi S."/>
            <person name="Bouchier C."/>
            <person name="Bouvet O."/>
            <person name="Calteau A."/>
            <person name="Chiapello H."/>
            <person name="Clermont O."/>
            <person name="Cruveiller S."/>
            <person name="Danchin A."/>
            <person name="Diard M."/>
            <person name="Dossat C."/>
            <person name="Karoui M.E."/>
            <person name="Frapy E."/>
            <person name="Garry L."/>
            <person name="Ghigo J.M."/>
            <person name="Gilles A.M."/>
            <person name="Johnson J."/>
            <person name="Le Bouguenec C."/>
            <person name="Lescat M."/>
            <person name="Mangenot S."/>
            <person name="Martinez-Jehanne V."/>
            <person name="Matic I."/>
            <person name="Nassif X."/>
            <person name="Oztas S."/>
            <person name="Petit M.A."/>
            <person name="Pichon C."/>
            <person name="Rouy Z."/>
            <person name="Ruf C.S."/>
            <person name="Schneider D."/>
            <person name="Tourret J."/>
            <person name="Vacherie B."/>
            <person name="Vallenet D."/>
            <person name="Medigue C."/>
            <person name="Rocha E.P.C."/>
            <person name="Denamur E."/>
        </authorList>
    </citation>
    <scope>NUCLEOTIDE SEQUENCE [LARGE SCALE GENOMIC DNA]</scope>
    <source>
        <strain>ATCC 35469 / DSM 13698 / BCRC 15582 / CCUG 18766 / IAM 14443 / JCM 21226 / LMG 7866 / NBRC 102419 / NCTC 12128 / CDC 0568-73</strain>
    </source>
</reference>
<protein>
    <recommendedName>
        <fullName evidence="1">Small ribosomal subunit protein uS4</fullName>
    </recommendedName>
    <alternativeName>
        <fullName evidence="2">30S ribosomal protein S4</fullName>
    </alternativeName>
</protein>
<gene>
    <name evidence="1" type="primary">rpsD</name>
    <name type="ordered locus">EFER_3280</name>
</gene>
<name>RS4_ESCF3</name>